<gene>
    <name evidence="1" type="primary">ribB</name>
    <name type="ordered locus">AF_2107</name>
</gene>
<feature type="chain" id="PRO_0000151823" description="3,4-dihydroxy-2-butanone 4-phosphate synthase">
    <location>
        <begin position="1"/>
        <end position="238"/>
    </location>
</feature>
<feature type="binding site" evidence="1">
    <location>
        <begin position="26"/>
        <end position="27"/>
    </location>
    <ligand>
        <name>D-ribulose 5-phosphate</name>
        <dbReference type="ChEBI" id="CHEBI:58121"/>
    </ligand>
</feature>
<feature type="binding site" evidence="1">
    <location>
        <position position="27"/>
    </location>
    <ligand>
        <name>Mg(2+)</name>
        <dbReference type="ChEBI" id="CHEBI:18420"/>
        <label>1</label>
    </ligand>
</feature>
<feature type="binding site" evidence="1">
    <location>
        <position position="27"/>
    </location>
    <ligand>
        <name>Mg(2+)</name>
        <dbReference type="ChEBI" id="CHEBI:18420"/>
        <label>2</label>
    </ligand>
</feature>
<feature type="binding site" evidence="1">
    <location>
        <position position="31"/>
    </location>
    <ligand>
        <name>D-ribulose 5-phosphate</name>
        <dbReference type="ChEBI" id="CHEBI:58121"/>
    </ligand>
</feature>
<feature type="binding site" evidence="1">
    <location>
        <begin position="166"/>
        <end position="170"/>
    </location>
    <ligand>
        <name>D-ribulose 5-phosphate</name>
        <dbReference type="ChEBI" id="CHEBI:58121"/>
    </ligand>
</feature>
<feature type="binding site" evidence="1">
    <location>
        <position position="190"/>
    </location>
    <ligand>
        <name>D-ribulose 5-phosphate</name>
        <dbReference type="ChEBI" id="CHEBI:58121"/>
    </ligand>
</feature>
<feature type="site" description="Essential for catalytic activity" evidence="1">
    <location>
        <position position="152"/>
    </location>
</feature>
<feature type="site" description="Essential for catalytic activity" evidence="1">
    <location>
        <position position="190"/>
    </location>
</feature>
<accession>O28173</accession>
<sequence>MILDFEESLRAFRKGSPVLIYDFEDREGETDIAIPAIHVGKDEVAMMRIDGGGLICVAIHPVAAEKLGLPFMHDVLRIASEKLPEIRKVADADDIKYDSRSSFSLWVNHRDTFTGITDVDRALTIRRIGEVVDEVMMGKKVDFGREFRSPGHVALLRAADKLTYERVGQTELSVALAEMAGIAPAVAICEMLDAETGKALTKEKAMEYAEEKGIPFIDGRTIVEHYRKFREVEVSLFV</sequence>
<keyword id="KW-0456">Lyase</keyword>
<keyword id="KW-0460">Magnesium</keyword>
<keyword id="KW-0464">Manganese</keyword>
<keyword id="KW-0479">Metal-binding</keyword>
<keyword id="KW-1185">Reference proteome</keyword>
<keyword id="KW-0686">Riboflavin biosynthesis</keyword>
<dbReference type="EC" id="4.1.99.12" evidence="1"/>
<dbReference type="EMBL" id="AE000782">
    <property type="protein sequence ID" value="AAB89141.1"/>
    <property type="molecule type" value="Genomic_DNA"/>
</dbReference>
<dbReference type="PIR" id="C69513">
    <property type="entry name" value="C69513"/>
</dbReference>
<dbReference type="RefSeq" id="WP_010879598.1">
    <property type="nucleotide sequence ID" value="NC_000917.1"/>
</dbReference>
<dbReference type="SMR" id="O28173"/>
<dbReference type="STRING" id="224325.AF_2107"/>
<dbReference type="PaxDb" id="224325-AF_2107"/>
<dbReference type="EnsemblBacteria" id="AAB89141">
    <property type="protein sequence ID" value="AAB89141"/>
    <property type="gene ID" value="AF_2107"/>
</dbReference>
<dbReference type="GeneID" id="24795854"/>
<dbReference type="KEGG" id="afu:AF_2107"/>
<dbReference type="eggNOG" id="arCOG01320">
    <property type="taxonomic scope" value="Archaea"/>
</dbReference>
<dbReference type="HOGENOM" id="CLU_020273_3_2_2"/>
<dbReference type="OrthoDB" id="25735at2157"/>
<dbReference type="PhylomeDB" id="O28173"/>
<dbReference type="UniPathway" id="UPA00275">
    <property type="reaction ID" value="UER00399"/>
</dbReference>
<dbReference type="Proteomes" id="UP000002199">
    <property type="component" value="Chromosome"/>
</dbReference>
<dbReference type="GO" id="GO:0005829">
    <property type="term" value="C:cytosol"/>
    <property type="evidence" value="ECO:0007669"/>
    <property type="project" value="TreeGrafter"/>
</dbReference>
<dbReference type="GO" id="GO:0008686">
    <property type="term" value="F:3,4-dihydroxy-2-butanone-4-phosphate synthase activity"/>
    <property type="evidence" value="ECO:0007669"/>
    <property type="project" value="UniProtKB-UniRule"/>
</dbReference>
<dbReference type="GO" id="GO:0000287">
    <property type="term" value="F:magnesium ion binding"/>
    <property type="evidence" value="ECO:0007669"/>
    <property type="project" value="UniProtKB-UniRule"/>
</dbReference>
<dbReference type="GO" id="GO:0030145">
    <property type="term" value="F:manganese ion binding"/>
    <property type="evidence" value="ECO:0007669"/>
    <property type="project" value="UniProtKB-UniRule"/>
</dbReference>
<dbReference type="GO" id="GO:0009231">
    <property type="term" value="P:riboflavin biosynthetic process"/>
    <property type="evidence" value="ECO:0007669"/>
    <property type="project" value="UniProtKB-UniRule"/>
</dbReference>
<dbReference type="Gene3D" id="3.90.870.10">
    <property type="entry name" value="DHBP synthase"/>
    <property type="match status" value="1"/>
</dbReference>
<dbReference type="HAMAP" id="MF_00180">
    <property type="entry name" value="RibB"/>
    <property type="match status" value="1"/>
</dbReference>
<dbReference type="InterPro" id="IPR017945">
    <property type="entry name" value="DHBP_synth_RibB-like_a/b_dom"/>
</dbReference>
<dbReference type="InterPro" id="IPR000422">
    <property type="entry name" value="DHBP_synthase_RibB"/>
</dbReference>
<dbReference type="NCBIfam" id="TIGR00506">
    <property type="entry name" value="ribB"/>
    <property type="match status" value="1"/>
</dbReference>
<dbReference type="PANTHER" id="PTHR21327:SF46">
    <property type="entry name" value="3,4-DIHYDROXY-2-BUTANONE 4-PHOSPHATE SYNTHASE"/>
    <property type="match status" value="1"/>
</dbReference>
<dbReference type="PANTHER" id="PTHR21327">
    <property type="entry name" value="GTP CYCLOHYDROLASE II-RELATED"/>
    <property type="match status" value="1"/>
</dbReference>
<dbReference type="Pfam" id="PF00926">
    <property type="entry name" value="DHBP_synthase"/>
    <property type="match status" value="1"/>
</dbReference>
<dbReference type="SUPFAM" id="SSF55821">
    <property type="entry name" value="YrdC/RibB"/>
    <property type="match status" value="1"/>
</dbReference>
<reference key="1">
    <citation type="journal article" date="1997" name="Nature">
        <title>The complete genome sequence of the hyperthermophilic, sulphate-reducing archaeon Archaeoglobus fulgidus.</title>
        <authorList>
            <person name="Klenk H.-P."/>
            <person name="Clayton R.A."/>
            <person name="Tomb J.-F."/>
            <person name="White O."/>
            <person name="Nelson K.E."/>
            <person name="Ketchum K.A."/>
            <person name="Dodson R.J."/>
            <person name="Gwinn M.L."/>
            <person name="Hickey E.K."/>
            <person name="Peterson J.D."/>
            <person name="Richardson D.L."/>
            <person name="Kerlavage A.R."/>
            <person name="Graham D.E."/>
            <person name="Kyrpides N.C."/>
            <person name="Fleischmann R.D."/>
            <person name="Quackenbush J."/>
            <person name="Lee N.H."/>
            <person name="Sutton G.G."/>
            <person name="Gill S.R."/>
            <person name="Kirkness E.F."/>
            <person name="Dougherty B.A."/>
            <person name="McKenney K."/>
            <person name="Adams M.D."/>
            <person name="Loftus B.J."/>
            <person name="Peterson S.N."/>
            <person name="Reich C.I."/>
            <person name="McNeil L.K."/>
            <person name="Badger J.H."/>
            <person name="Glodek A."/>
            <person name="Zhou L."/>
            <person name="Overbeek R."/>
            <person name="Gocayne J.D."/>
            <person name="Weidman J.F."/>
            <person name="McDonald L.A."/>
            <person name="Utterback T.R."/>
            <person name="Cotton M.D."/>
            <person name="Spriggs T."/>
            <person name="Artiach P."/>
            <person name="Kaine B.P."/>
            <person name="Sykes S.M."/>
            <person name="Sadow P.W."/>
            <person name="D'Andrea K.P."/>
            <person name="Bowman C."/>
            <person name="Fujii C."/>
            <person name="Garland S.A."/>
            <person name="Mason T.M."/>
            <person name="Olsen G.J."/>
            <person name="Fraser C.M."/>
            <person name="Smith H.O."/>
            <person name="Woese C.R."/>
            <person name="Venter J.C."/>
        </authorList>
    </citation>
    <scope>NUCLEOTIDE SEQUENCE [LARGE SCALE GENOMIC DNA]</scope>
    <source>
        <strain>ATCC 49558 / DSM 4304 / JCM 9628 / NBRC 100126 / VC-16</strain>
    </source>
</reference>
<organism>
    <name type="scientific">Archaeoglobus fulgidus (strain ATCC 49558 / DSM 4304 / JCM 9628 / NBRC 100126 / VC-16)</name>
    <dbReference type="NCBI Taxonomy" id="224325"/>
    <lineage>
        <taxon>Archaea</taxon>
        <taxon>Methanobacteriati</taxon>
        <taxon>Methanobacteriota</taxon>
        <taxon>Archaeoglobi</taxon>
        <taxon>Archaeoglobales</taxon>
        <taxon>Archaeoglobaceae</taxon>
        <taxon>Archaeoglobus</taxon>
    </lineage>
</organism>
<proteinExistence type="inferred from homology"/>
<evidence type="ECO:0000255" key="1">
    <source>
        <dbReference type="HAMAP-Rule" id="MF_00180"/>
    </source>
</evidence>
<name>RIBB_ARCFU</name>
<comment type="function">
    <text evidence="1">Catalyzes the conversion of D-ribulose 5-phosphate to formate and 3,4-dihydroxy-2-butanone 4-phosphate.</text>
</comment>
<comment type="catalytic activity">
    <reaction evidence="1">
        <text>D-ribulose 5-phosphate = (2S)-2-hydroxy-3-oxobutyl phosphate + formate + H(+)</text>
        <dbReference type="Rhea" id="RHEA:18457"/>
        <dbReference type="ChEBI" id="CHEBI:15378"/>
        <dbReference type="ChEBI" id="CHEBI:15740"/>
        <dbReference type="ChEBI" id="CHEBI:58121"/>
        <dbReference type="ChEBI" id="CHEBI:58830"/>
        <dbReference type="EC" id="4.1.99.12"/>
    </reaction>
</comment>
<comment type="cofactor">
    <cofactor evidence="1">
        <name>Mg(2+)</name>
        <dbReference type="ChEBI" id="CHEBI:18420"/>
    </cofactor>
    <cofactor evidence="1">
        <name>Mn(2+)</name>
        <dbReference type="ChEBI" id="CHEBI:29035"/>
    </cofactor>
    <text evidence="1">Binds 2 divalent metal cations per subunit. Magnesium or manganese.</text>
</comment>
<comment type="pathway">
    <text evidence="1">Cofactor biosynthesis; riboflavin biosynthesis; 2-hydroxy-3-oxobutyl phosphate from D-ribulose 5-phosphate: step 1/1.</text>
</comment>
<comment type="subunit">
    <text evidence="1">Homodimer.</text>
</comment>
<comment type="similarity">
    <text evidence="1">Belongs to the DHBP synthase family.</text>
</comment>
<protein>
    <recommendedName>
        <fullName evidence="1">3,4-dihydroxy-2-butanone 4-phosphate synthase</fullName>
        <shortName evidence="1">DHBP synthase</shortName>
        <ecNumber evidence="1">4.1.99.12</ecNumber>
    </recommendedName>
</protein>